<proteinExistence type="inferred from homology"/>
<name>GLGB2_RHIEC</name>
<dbReference type="EC" id="2.4.1.18" evidence="1"/>
<dbReference type="EMBL" id="CP000138">
    <property type="protein sequence ID" value="ABC94165.1"/>
    <property type="molecule type" value="Genomic_DNA"/>
</dbReference>
<dbReference type="RefSeq" id="WP_011428582.1">
    <property type="nucleotide sequence ID" value="NC_007766.1"/>
</dbReference>
<dbReference type="SMR" id="Q2JZ21"/>
<dbReference type="CAZy" id="CBM48">
    <property type="family name" value="Carbohydrate-Binding Module Family 48"/>
</dbReference>
<dbReference type="CAZy" id="GH13">
    <property type="family name" value="Glycoside Hydrolase Family 13"/>
</dbReference>
<dbReference type="KEGG" id="ret:RHE_PF00275"/>
<dbReference type="HOGENOM" id="CLU_004245_3_2_5"/>
<dbReference type="OrthoDB" id="9800174at2"/>
<dbReference type="UniPathway" id="UPA00164"/>
<dbReference type="Proteomes" id="UP000001936">
    <property type="component" value="Plasmid p42f"/>
</dbReference>
<dbReference type="GO" id="GO:0005829">
    <property type="term" value="C:cytosol"/>
    <property type="evidence" value="ECO:0007669"/>
    <property type="project" value="TreeGrafter"/>
</dbReference>
<dbReference type="GO" id="GO:0003844">
    <property type="term" value="F:1,4-alpha-glucan branching enzyme activity"/>
    <property type="evidence" value="ECO:0007669"/>
    <property type="project" value="UniProtKB-UniRule"/>
</dbReference>
<dbReference type="GO" id="GO:0043169">
    <property type="term" value="F:cation binding"/>
    <property type="evidence" value="ECO:0007669"/>
    <property type="project" value="InterPro"/>
</dbReference>
<dbReference type="GO" id="GO:0004553">
    <property type="term" value="F:hydrolase activity, hydrolyzing O-glycosyl compounds"/>
    <property type="evidence" value="ECO:0007669"/>
    <property type="project" value="InterPro"/>
</dbReference>
<dbReference type="GO" id="GO:0005978">
    <property type="term" value="P:glycogen biosynthetic process"/>
    <property type="evidence" value="ECO:0007669"/>
    <property type="project" value="UniProtKB-UniRule"/>
</dbReference>
<dbReference type="CDD" id="cd11322">
    <property type="entry name" value="AmyAc_Glg_BE"/>
    <property type="match status" value="1"/>
</dbReference>
<dbReference type="CDD" id="cd02855">
    <property type="entry name" value="E_set_GBE_prok_N"/>
    <property type="match status" value="1"/>
</dbReference>
<dbReference type="FunFam" id="2.60.40.10:FF:000169">
    <property type="entry name" value="1,4-alpha-glucan branching enzyme GlgB"/>
    <property type="match status" value="1"/>
</dbReference>
<dbReference type="FunFam" id="2.60.40.1180:FF:000002">
    <property type="entry name" value="1,4-alpha-glucan branching enzyme GlgB"/>
    <property type="match status" value="1"/>
</dbReference>
<dbReference type="FunFam" id="3.20.20.80:FF:000003">
    <property type="entry name" value="1,4-alpha-glucan branching enzyme GlgB"/>
    <property type="match status" value="1"/>
</dbReference>
<dbReference type="Gene3D" id="3.20.20.80">
    <property type="entry name" value="Glycosidases"/>
    <property type="match status" value="1"/>
</dbReference>
<dbReference type="Gene3D" id="2.60.40.1180">
    <property type="entry name" value="Golgi alpha-mannosidase II"/>
    <property type="match status" value="1"/>
</dbReference>
<dbReference type="Gene3D" id="2.60.40.10">
    <property type="entry name" value="Immunoglobulins"/>
    <property type="match status" value="1"/>
</dbReference>
<dbReference type="HAMAP" id="MF_00685">
    <property type="entry name" value="GlgB"/>
    <property type="match status" value="1"/>
</dbReference>
<dbReference type="InterPro" id="IPR006048">
    <property type="entry name" value="A-amylase/branching_C"/>
</dbReference>
<dbReference type="InterPro" id="IPR037439">
    <property type="entry name" value="Branching_enzy"/>
</dbReference>
<dbReference type="InterPro" id="IPR006407">
    <property type="entry name" value="GlgB"/>
</dbReference>
<dbReference type="InterPro" id="IPR054169">
    <property type="entry name" value="GlgB_N"/>
</dbReference>
<dbReference type="InterPro" id="IPR044143">
    <property type="entry name" value="GlgB_N_E_set_prok"/>
</dbReference>
<dbReference type="InterPro" id="IPR006047">
    <property type="entry name" value="Glyco_hydro_13_cat_dom"/>
</dbReference>
<dbReference type="InterPro" id="IPR004193">
    <property type="entry name" value="Glyco_hydro_13_N"/>
</dbReference>
<dbReference type="InterPro" id="IPR013780">
    <property type="entry name" value="Glyco_hydro_b"/>
</dbReference>
<dbReference type="InterPro" id="IPR017853">
    <property type="entry name" value="Glycoside_hydrolase_SF"/>
</dbReference>
<dbReference type="InterPro" id="IPR013783">
    <property type="entry name" value="Ig-like_fold"/>
</dbReference>
<dbReference type="InterPro" id="IPR014756">
    <property type="entry name" value="Ig_E-set"/>
</dbReference>
<dbReference type="NCBIfam" id="TIGR01515">
    <property type="entry name" value="branching_enzym"/>
    <property type="match status" value="1"/>
</dbReference>
<dbReference type="NCBIfam" id="NF003811">
    <property type="entry name" value="PRK05402.1"/>
    <property type="match status" value="1"/>
</dbReference>
<dbReference type="NCBIfam" id="NF008967">
    <property type="entry name" value="PRK12313.1"/>
    <property type="match status" value="1"/>
</dbReference>
<dbReference type="PANTHER" id="PTHR43651">
    <property type="entry name" value="1,4-ALPHA-GLUCAN-BRANCHING ENZYME"/>
    <property type="match status" value="1"/>
</dbReference>
<dbReference type="PANTHER" id="PTHR43651:SF3">
    <property type="entry name" value="1,4-ALPHA-GLUCAN-BRANCHING ENZYME"/>
    <property type="match status" value="1"/>
</dbReference>
<dbReference type="Pfam" id="PF00128">
    <property type="entry name" value="Alpha-amylase"/>
    <property type="match status" value="1"/>
</dbReference>
<dbReference type="Pfam" id="PF02806">
    <property type="entry name" value="Alpha-amylase_C"/>
    <property type="match status" value="1"/>
</dbReference>
<dbReference type="Pfam" id="PF02922">
    <property type="entry name" value="CBM_48"/>
    <property type="match status" value="1"/>
</dbReference>
<dbReference type="Pfam" id="PF22019">
    <property type="entry name" value="GlgB_N"/>
    <property type="match status" value="1"/>
</dbReference>
<dbReference type="PIRSF" id="PIRSF000463">
    <property type="entry name" value="GlgB"/>
    <property type="match status" value="1"/>
</dbReference>
<dbReference type="SMART" id="SM00642">
    <property type="entry name" value="Aamy"/>
    <property type="match status" value="1"/>
</dbReference>
<dbReference type="SUPFAM" id="SSF51445">
    <property type="entry name" value="(Trans)glycosidases"/>
    <property type="match status" value="1"/>
</dbReference>
<dbReference type="SUPFAM" id="SSF81296">
    <property type="entry name" value="E set domains"/>
    <property type="match status" value="2"/>
</dbReference>
<dbReference type="SUPFAM" id="SSF51011">
    <property type="entry name" value="Glycosyl hydrolase domain"/>
    <property type="match status" value="1"/>
</dbReference>
<feature type="chain" id="PRO_0000260683" description="1,4-alpha-glucan branching enzyme GlgB 2">
    <location>
        <begin position="1"/>
        <end position="732"/>
    </location>
</feature>
<feature type="active site" description="Nucleophile" evidence="1">
    <location>
        <position position="413"/>
    </location>
</feature>
<feature type="active site" description="Proton donor" evidence="1">
    <location>
        <position position="466"/>
    </location>
</feature>
<geneLocation type="plasmid">
    <name>p42f</name>
</geneLocation>
<organism>
    <name type="scientific">Rhizobium etli (strain ATCC 51251 / DSM 11541 / JCM 21823 / NBRC 15573 / CFN 42)</name>
    <dbReference type="NCBI Taxonomy" id="347834"/>
    <lineage>
        <taxon>Bacteria</taxon>
        <taxon>Pseudomonadati</taxon>
        <taxon>Pseudomonadota</taxon>
        <taxon>Alphaproteobacteria</taxon>
        <taxon>Hyphomicrobiales</taxon>
        <taxon>Rhizobiaceae</taxon>
        <taxon>Rhizobium/Agrobacterium group</taxon>
        <taxon>Rhizobium</taxon>
    </lineage>
</organism>
<comment type="function">
    <text evidence="1">Catalyzes the formation of the alpha-1,6-glucosidic linkages in glycogen by scission of a 1,4-alpha-linked oligosaccharide from growing alpha-1,4-glucan chains and the subsequent attachment of the oligosaccharide to the alpha-1,6 position.</text>
</comment>
<comment type="catalytic activity">
    <reaction evidence="1">
        <text>Transfers a segment of a (1-&gt;4)-alpha-D-glucan chain to a primary hydroxy group in a similar glucan chain.</text>
        <dbReference type="EC" id="2.4.1.18"/>
    </reaction>
</comment>
<comment type="pathway">
    <text evidence="1">Glycan biosynthesis; glycogen biosynthesis.</text>
</comment>
<comment type="subunit">
    <text evidence="1">Monomer.</text>
</comment>
<comment type="similarity">
    <text evidence="1">Belongs to the glycosyl hydrolase 13 family. GlgB subfamily.</text>
</comment>
<protein>
    <recommendedName>
        <fullName evidence="1">1,4-alpha-glucan branching enzyme GlgB 2</fullName>
        <ecNumber evidence="1">2.4.1.18</ecNumber>
    </recommendedName>
    <alternativeName>
        <fullName evidence="1">1,4-alpha-D-glucan:1,4-alpha-D-glucan 6-glucosyl-transferase 2</fullName>
    </alternativeName>
    <alternativeName>
        <fullName evidence="1">Alpha-(1-&gt;4)-glucan branching enzyme 2</fullName>
    </alternativeName>
    <alternativeName>
        <fullName evidence="1">Glycogen branching enzyme 2</fullName>
        <shortName evidence="1">BE 2</shortName>
    </alternativeName>
</protein>
<evidence type="ECO:0000255" key="1">
    <source>
        <dbReference type="HAMAP-Rule" id="MF_00685"/>
    </source>
</evidence>
<gene>
    <name evidence="1" type="primary">glgB2</name>
    <name type="ordered locus">RHE_PF00275</name>
</gene>
<reference key="1">
    <citation type="journal article" date="2006" name="Proc. Natl. Acad. Sci. U.S.A.">
        <title>The partitioned Rhizobium etli genome: genetic and metabolic redundancy in seven interacting replicons.</title>
        <authorList>
            <person name="Gonzalez V."/>
            <person name="Santamaria R.I."/>
            <person name="Bustos P."/>
            <person name="Hernandez-Gonzalez I."/>
            <person name="Medrano-Soto A."/>
            <person name="Moreno-Hagelsieb G."/>
            <person name="Janga S.C."/>
            <person name="Ramirez M.A."/>
            <person name="Jimenez-Jacinto V."/>
            <person name="Collado-Vides J."/>
            <person name="Davila G."/>
        </authorList>
    </citation>
    <scope>NUCLEOTIDE SEQUENCE [LARGE SCALE GENOMIC DNA]</scope>
    <source>
        <strain>ATCC 51251 / DSM 11541 / JCM 21823 / NBRC 15573 / CFN 42</strain>
    </source>
</reference>
<sequence>MNVERSEFLAGVGHDALWALIEGRHGDPFSILGPHESGGMTIVRVYLPGAEGVDLIEAASGRVVTPFSIAHPSGLFAAAMGSRMHYRLRITWPDGEQITEDPYSFGLLLGELDLHLISEGTHYSLSRTLGAVEMAIDDVAGVRFAVWAPNARRVSVVGDFNAWDGRRNPMRLRQSAGVWELFMPRLAPGERYKFEIIDPHGNCLPQKADPVARASEAAPSTASIVASSTRFRWTDDNWMKGQSRQQRLEGPISVYEVHAGSWLRENGGRSLDWVELSQRLVPYVREMGFTHIELLPIMEHPFGGSWGYQPLGLFAPTGRYGTPEDLAYFIDRCHGAGIGVILDWVPAHFPTDVWGLARFDGTALYEHEDPREGFHRDWNTLIYNLGRNEVKGFLIASALEWLERYHIDGLRVDAVASMLYRDYSRNEGEWIPNRYGGRENLEAVEFFKHLNSIVHERCPHAMMIAEESTAWPGVTKPPEEGGLGFDMKWNMGWMHDSLSYIEKDPVYRSYHHGTMTFGMIYAYSERFILPISHDEVVYGKGSLLGKMPGDEWQKFANLRSYLAFMWGHPGKKLIFMGGEIAQPSEWNHDASIAWDVLDQPAHAGLQRLVKDLNGFYKDEAALQFGDFHSEGFDWAAADDAVNSVLGMLRYAPDRSSSVLVVSNFTPVPRYGYRIGVPQDGVWIEKVTTDAREYGGSGLVNGAVSSESVPAHGRPHSLWLTLPPLATVLLKSP</sequence>
<accession>Q2JZ21</accession>
<keyword id="KW-0119">Carbohydrate metabolism</keyword>
<keyword id="KW-0320">Glycogen biosynthesis</keyword>
<keyword id="KW-0321">Glycogen metabolism</keyword>
<keyword id="KW-0328">Glycosyltransferase</keyword>
<keyword id="KW-0614">Plasmid</keyword>
<keyword id="KW-1185">Reference proteome</keyword>
<keyword id="KW-0808">Transferase</keyword>